<protein>
    <recommendedName>
        <fullName evidence="1">Ribosomal RNA small subunit methyltransferase G</fullName>
        <ecNumber evidence="1">2.1.1.170</ecNumber>
    </recommendedName>
    <alternativeName>
        <fullName evidence="1">16S rRNA 7-methylguanosine methyltransferase</fullName>
        <shortName evidence="1">16S rRNA m7G methyltransferase</shortName>
    </alternativeName>
</protein>
<feature type="chain" id="PRO_1000092649" description="Ribosomal RNA small subunit methyltransferase G">
    <location>
        <begin position="1"/>
        <end position="207"/>
    </location>
</feature>
<feature type="binding site" evidence="1">
    <location>
        <position position="73"/>
    </location>
    <ligand>
        <name>S-adenosyl-L-methionine</name>
        <dbReference type="ChEBI" id="CHEBI:59789"/>
    </ligand>
</feature>
<feature type="binding site" evidence="1">
    <location>
        <position position="78"/>
    </location>
    <ligand>
        <name>S-adenosyl-L-methionine</name>
        <dbReference type="ChEBI" id="CHEBI:59789"/>
    </ligand>
</feature>
<feature type="binding site" evidence="1">
    <location>
        <begin position="124"/>
        <end position="125"/>
    </location>
    <ligand>
        <name>S-adenosyl-L-methionine</name>
        <dbReference type="ChEBI" id="CHEBI:59789"/>
    </ligand>
</feature>
<feature type="binding site" evidence="1">
    <location>
        <position position="139"/>
    </location>
    <ligand>
        <name>S-adenosyl-L-methionine</name>
        <dbReference type="ChEBI" id="CHEBI:59789"/>
    </ligand>
</feature>
<reference key="1">
    <citation type="journal article" date="2011" name="J. Bacteriol.">
        <title>Comparative genomics of 28 Salmonella enterica isolates: evidence for CRISPR-mediated adaptive sublineage evolution.</title>
        <authorList>
            <person name="Fricke W.F."/>
            <person name="Mammel M.K."/>
            <person name="McDermott P.F."/>
            <person name="Tartera C."/>
            <person name="White D.G."/>
            <person name="Leclerc J.E."/>
            <person name="Ravel J."/>
            <person name="Cebula T.A."/>
        </authorList>
    </citation>
    <scope>NUCLEOTIDE SEQUENCE [LARGE SCALE GENOMIC DNA]</scope>
    <source>
        <strain>SL476</strain>
    </source>
</reference>
<organism>
    <name type="scientific">Salmonella heidelberg (strain SL476)</name>
    <dbReference type="NCBI Taxonomy" id="454169"/>
    <lineage>
        <taxon>Bacteria</taxon>
        <taxon>Pseudomonadati</taxon>
        <taxon>Pseudomonadota</taxon>
        <taxon>Gammaproteobacteria</taxon>
        <taxon>Enterobacterales</taxon>
        <taxon>Enterobacteriaceae</taxon>
        <taxon>Salmonella</taxon>
    </lineage>
</organism>
<name>RSMG_SALHS</name>
<evidence type="ECO:0000255" key="1">
    <source>
        <dbReference type="HAMAP-Rule" id="MF_00074"/>
    </source>
</evidence>
<dbReference type="EC" id="2.1.1.170" evidence="1"/>
<dbReference type="EMBL" id="CP001120">
    <property type="protein sequence ID" value="ACF66981.1"/>
    <property type="molecule type" value="Genomic_DNA"/>
</dbReference>
<dbReference type="RefSeq" id="WP_001519938.1">
    <property type="nucleotide sequence ID" value="NC_011083.1"/>
</dbReference>
<dbReference type="SMR" id="B4TAY2"/>
<dbReference type="KEGG" id="seh:SeHA_C4206"/>
<dbReference type="HOGENOM" id="CLU_065341_2_2_6"/>
<dbReference type="Proteomes" id="UP000001866">
    <property type="component" value="Chromosome"/>
</dbReference>
<dbReference type="GO" id="GO:0005829">
    <property type="term" value="C:cytosol"/>
    <property type="evidence" value="ECO:0007669"/>
    <property type="project" value="TreeGrafter"/>
</dbReference>
<dbReference type="GO" id="GO:0070043">
    <property type="term" value="F:rRNA (guanine-N7-)-methyltransferase activity"/>
    <property type="evidence" value="ECO:0007669"/>
    <property type="project" value="UniProtKB-UniRule"/>
</dbReference>
<dbReference type="CDD" id="cd02440">
    <property type="entry name" value="AdoMet_MTases"/>
    <property type="match status" value="1"/>
</dbReference>
<dbReference type="FunFam" id="3.40.50.150:FF:000032">
    <property type="entry name" value="Ribosomal RNA small subunit methyltransferase G"/>
    <property type="match status" value="1"/>
</dbReference>
<dbReference type="Gene3D" id="3.40.50.150">
    <property type="entry name" value="Vaccinia Virus protein VP39"/>
    <property type="match status" value="1"/>
</dbReference>
<dbReference type="HAMAP" id="MF_00074">
    <property type="entry name" value="16SrRNA_methyltr_G"/>
    <property type="match status" value="1"/>
</dbReference>
<dbReference type="InterPro" id="IPR003682">
    <property type="entry name" value="rRNA_ssu_MeTfrase_G"/>
</dbReference>
<dbReference type="InterPro" id="IPR029063">
    <property type="entry name" value="SAM-dependent_MTases_sf"/>
</dbReference>
<dbReference type="NCBIfam" id="TIGR00138">
    <property type="entry name" value="rsmG_gidB"/>
    <property type="match status" value="1"/>
</dbReference>
<dbReference type="PANTHER" id="PTHR31760">
    <property type="entry name" value="S-ADENOSYL-L-METHIONINE-DEPENDENT METHYLTRANSFERASES SUPERFAMILY PROTEIN"/>
    <property type="match status" value="1"/>
</dbReference>
<dbReference type="PANTHER" id="PTHR31760:SF0">
    <property type="entry name" value="S-ADENOSYL-L-METHIONINE-DEPENDENT METHYLTRANSFERASES SUPERFAMILY PROTEIN"/>
    <property type="match status" value="1"/>
</dbReference>
<dbReference type="Pfam" id="PF02527">
    <property type="entry name" value="GidB"/>
    <property type="match status" value="1"/>
</dbReference>
<dbReference type="PIRSF" id="PIRSF003078">
    <property type="entry name" value="GidB"/>
    <property type="match status" value="1"/>
</dbReference>
<dbReference type="SUPFAM" id="SSF53335">
    <property type="entry name" value="S-adenosyl-L-methionine-dependent methyltransferases"/>
    <property type="match status" value="1"/>
</dbReference>
<sequence>MLNKLSRLLADAGISLTDHQKTLLVAYVDMLHKWNKAYNLTSVRDPNEMLVRHILDSIVVAPYLQGQRFIDVGTGPGLPGIPLAIVLPDAHFTLLDSLGKRVRFLRQVQHELKLENITPVQSRVEAYPSEPPFDGVISRAFASLNDMVSWCHHLPGEKGRFYALKGQLPGDEIASLPDNFSVESVEKLRVPQLEGERHLVIIKSNKV</sequence>
<comment type="function">
    <text evidence="1">Specifically methylates the N7 position of guanine in position 527 of 16S rRNA.</text>
</comment>
<comment type="catalytic activity">
    <reaction evidence="1">
        <text>guanosine(527) in 16S rRNA + S-adenosyl-L-methionine = N(7)-methylguanosine(527) in 16S rRNA + S-adenosyl-L-homocysteine</text>
        <dbReference type="Rhea" id="RHEA:42732"/>
        <dbReference type="Rhea" id="RHEA-COMP:10209"/>
        <dbReference type="Rhea" id="RHEA-COMP:10210"/>
        <dbReference type="ChEBI" id="CHEBI:57856"/>
        <dbReference type="ChEBI" id="CHEBI:59789"/>
        <dbReference type="ChEBI" id="CHEBI:74269"/>
        <dbReference type="ChEBI" id="CHEBI:74480"/>
        <dbReference type="EC" id="2.1.1.170"/>
    </reaction>
</comment>
<comment type="subcellular location">
    <subcellularLocation>
        <location evidence="1">Cytoplasm</location>
    </subcellularLocation>
</comment>
<comment type="similarity">
    <text evidence="1">Belongs to the methyltransferase superfamily. RNA methyltransferase RsmG family.</text>
</comment>
<gene>
    <name evidence="1" type="primary">rsmG</name>
    <name type="ordered locus">SeHA_C4206</name>
</gene>
<accession>B4TAY2</accession>
<proteinExistence type="inferred from homology"/>
<keyword id="KW-0963">Cytoplasm</keyword>
<keyword id="KW-0489">Methyltransferase</keyword>
<keyword id="KW-0698">rRNA processing</keyword>
<keyword id="KW-0949">S-adenosyl-L-methionine</keyword>
<keyword id="KW-0808">Transferase</keyword>